<keyword id="KW-0067">ATP-binding</keyword>
<keyword id="KW-0149">Chlorophyll biosynthesis</keyword>
<keyword id="KW-0150">Chloroplast</keyword>
<keyword id="KW-0436">Ligase</keyword>
<keyword id="KW-0547">Nucleotide-binding</keyword>
<keyword id="KW-0602">Photosynthesis</keyword>
<keyword id="KW-0934">Plastid</keyword>
<keyword id="KW-1185">Reference proteome</keyword>
<keyword id="KW-0809">Transit peptide</keyword>
<protein>
    <recommendedName>
        <fullName>Magnesium-chelatase subunit ChlD, chloroplastic</fullName>
        <shortName>Mg-chelatase subunit D</shortName>
        <ecNumber>6.6.1.1</ecNumber>
    </recommendedName>
    <alternativeName>
        <fullName>Mg-protoporphyrin IX chelatase subunit ChlD</fullName>
    </alternativeName>
    <alternativeName>
        <fullName>Protein CHLORINA 1</fullName>
    </alternativeName>
</protein>
<accession>B8AMB8</accession>
<reference key="1">
    <citation type="journal article" date="2005" name="PLoS Biol.">
        <title>The genomes of Oryza sativa: a history of duplications.</title>
        <authorList>
            <person name="Yu J."/>
            <person name="Wang J."/>
            <person name="Lin W."/>
            <person name="Li S."/>
            <person name="Li H."/>
            <person name="Zhou J."/>
            <person name="Ni P."/>
            <person name="Dong W."/>
            <person name="Hu S."/>
            <person name="Zeng C."/>
            <person name="Zhang J."/>
            <person name="Zhang Y."/>
            <person name="Li R."/>
            <person name="Xu Z."/>
            <person name="Li S."/>
            <person name="Li X."/>
            <person name="Zheng H."/>
            <person name="Cong L."/>
            <person name="Lin L."/>
            <person name="Yin J."/>
            <person name="Geng J."/>
            <person name="Li G."/>
            <person name="Shi J."/>
            <person name="Liu J."/>
            <person name="Lv H."/>
            <person name="Li J."/>
            <person name="Wang J."/>
            <person name="Deng Y."/>
            <person name="Ran L."/>
            <person name="Shi X."/>
            <person name="Wang X."/>
            <person name="Wu Q."/>
            <person name="Li C."/>
            <person name="Ren X."/>
            <person name="Wang J."/>
            <person name="Wang X."/>
            <person name="Li D."/>
            <person name="Liu D."/>
            <person name="Zhang X."/>
            <person name="Ji Z."/>
            <person name="Zhao W."/>
            <person name="Sun Y."/>
            <person name="Zhang Z."/>
            <person name="Bao J."/>
            <person name="Han Y."/>
            <person name="Dong L."/>
            <person name="Ji J."/>
            <person name="Chen P."/>
            <person name="Wu S."/>
            <person name="Liu J."/>
            <person name="Xiao Y."/>
            <person name="Bu D."/>
            <person name="Tan J."/>
            <person name="Yang L."/>
            <person name="Ye C."/>
            <person name="Zhang J."/>
            <person name="Xu J."/>
            <person name="Zhou Y."/>
            <person name="Yu Y."/>
            <person name="Zhang B."/>
            <person name="Zhuang S."/>
            <person name="Wei H."/>
            <person name="Liu B."/>
            <person name="Lei M."/>
            <person name="Yu H."/>
            <person name="Li Y."/>
            <person name="Xu H."/>
            <person name="Wei S."/>
            <person name="He X."/>
            <person name="Fang L."/>
            <person name="Zhang Z."/>
            <person name="Zhang Y."/>
            <person name="Huang X."/>
            <person name="Su Z."/>
            <person name="Tong W."/>
            <person name="Li J."/>
            <person name="Tong Z."/>
            <person name="Li S."/>
            <person name="Ye J."/>
            <person name="Wang L."/>
            <person name="Fang L."/>
            <person name="Lei T."/>
            <person name="Chen C.-S."/>
            <person name="Chen H.-C."/>
            <person name="Xu Z."/>
            <person name="Li H."/>
            <person name="Huang H."/>
            <person name="Zhang F."/>
            <person name="Xu H."/>
            <person name="Li N."/>
            <person name="Zhao C."/>
            <person name="Li S."/>
            <person name="Dong L."/>
            <person name="Huang Y."/>
            <person name="Li L."/>
            <person name="Xi Y."/>
            <person name="Qi Q."/>
            <person name="Li W."/>
            <person name="Zhang B."/>
            <person name="Hu W."/>
            <person name="Zhang Y."/>
            <person name="Tian X."/>
            <person name="Jiao Y."/>
            <person name="Liang X."/>
            <person name="Jin J."/>
            <person name="Gao L."/>
            <person name="Zheng W."/>
            <person name="Hao B."/>
            <person name="Liu S.-M."/>
            <person name="Wang W."/>
            <person name="Yuan L."/>
            <person name="Cao M."/>
            <person name="McDermott J."/>
            <person name="Samudrala R."/>
            <person name="Wang J."/>
            <person name="Wong G.K.-S."/>
            <person name="Yang H."/>
        </authorList>
    </citation>
    <scope>NUCLEOTIDE SEQUENCE [LARGE SCALE GENOMIC DNA]</scope>
    <source>
        <strain>cv. 93-11</strain>
    </source>
</reference>
<dbReference type="EC" id="6.6.1.1"/>
<dbReference type="EMBL" id="CM000128">
    <property type="protein sequence ID" value="EEC76389.1"/>
    <property type="molecule type" value="Genomic_DNA"/>
</dbReference>
<dbReference type="SMR" id="B8AMB8"/>
<dbReference type="STRING" id="39946.B8AMB8"/>
<dbReference type="EnsemblPlants" id="BGIOSGA013798-TA">
    <property type="protein sequence ID" value="BGIOSGA013798-PA"/>
    <property type="gene ID" value="BGIOSGA013798"/>
</dbReference>
<dbReference type="EnsemblPlants" id="OsKYG_03g0039120.01">
    <property type="protein sequence ID" value="OsKYG_03g0039120.01"/>
    <property type="gene ID" value="OsKYG_03g0039120"/>
</dbReference>
<dbReference type="EnsemblPlants" id="OsLima_03g0039160.01">
    <property type="protein sequence ID" value="OsLima_03g0039160.01"/>
    <property type="gene ID" value="OsLima_03g0039160"/>
</dbReference>
<dbReference type="EnsemblPlants" id="OsLiXu_03g0038800.01">
    <property type="protein sequence ID" value="OsLiXu_03g0038800.01"/>
    <property type="gene ID" value="OsLiXu_03g0038800"/>
</dbReference>
<dbReference type="EnsemblPlants" id="OsMH63_03G038800_01">
    <property type="protein sequence ID" value="OsMH63_03G038800_01"/>
    <property type="gene ID" value="OsMH63_03G038800"/>
</dbReference>
<dbReference type="EnsemblPlants" id="OsPr106_03g0038830.02">
    <property type="protein sequence ID" value="OsPr106_03g0038830.02"/>
    <property type="gene ID" value="OsPr106_03g0038830"/>
</dbReference>
<dbReference type="Gramene" id="BGIOSGA013798-TA">
    <property type="protein sequence ID" value="BGIOSGA013798-PA"/>
    <property type="gene ID" value="BGIOSGA013798"/>
</dbReference>
<dbReference type="Gramene" id="OsKYG_03g0039120.01">
    <property type="protein sequence ID" value="OsKYG_03g0039120.01"/>
    <property type="gene ID" value="OsKYG_03g0039120"/>
</dbReference>
<dbReference type="Gramene" id="OsLima_03g0039160.01">
    <property type="protein sequence ID" value="OsLima_03g0039160.01"/>
    <property type="gene ID" value="OsLima_03g0039160"/>
</dbReference>
<dbReference type="Gramene" id="OsLiXu_03g0038800.01">
    <property type="protein sequence ID" value="OsLiXu_03g0038800.01"/>
    <property type="gene ID" value="OsLiXu_03g0038800"/>
</dbReference>
<dbReference type="Gramene" id="OsMH63_03G038800_01">
    <property type="protein sequence ID" value="OsMH63_03G038800_01"/>
    <property type="gene ID" value="OsMH63_03G038800"/>
</dbReference>
<dbReference type="Gramene" id="OsPr106_03g0038830.02">
    <property type="protein sequence ID" value="OsPr106_03g0038830.02"/>
    <property type="gene ID" value="OsPr106_03g0038830"/>
</dbReference>
<dbReference type="HOGENOM" id="CLU_016684_6_2_1"/>
<dbReference type="OMA" id="YYHLPKA"/>
<dbReference type="UniPathway" id="UPA00668"/>
<dbReference type="Proteomes" id="UP000007015">
    <property type="component" value="Chromosome 3"/>
</dbReference>
<dbReference type="GO" id="GO:0009507">
    <property type="term" value="C:chloroplast"/>
    <property type="evidence" value="ECO:0007669"/>
    <property type="project" value="UniProtKB-SubCell"/>
</dbReference>
<dbReference type="GO" id="GO:0005524">
    <property type="term" value="F:ATP binding"/>
    <property type="evidence" value="ECO:0007669"/>
    <property type="project" value="UniProtKB-KW"/>
</dbReference>
<dbReference type="GO" id="GO:0016887">
    <property type="term" value="F:ATP hydrolysis activity"/>
    <property type="evidence" value="ECO:0007669"/>
    <property type="project" value="InterPro"/>
</dbReference>
<dbReference type="GO" id="GO:0016851">
    <property type="term" value="F:magnesium chelatase activity"/>
    <property type="evidence" value="ECO:0007669"/>
    <property type="project" value="UniProtKB-EC"/>
</dbReference>
<dbReference type="GO" id="GO:0015995">
    <property type="term" value="P:chlorophyll biosynthetic process"/>
    <property type="evidence" value="ECO:0007669"/>
    <property type="project" value="UniProtKB-UniPathway"/>
</dbReference>
<dbReference type="GO" id="GO:0015979">
    <property type="term" value="P:photosynthesis"/>
    <property type="evidence" value="ECO:0007669"/>
    <property type="project" value="UniProtKB-KW"/>
</dbReference>
<dbReference type="CDD" id="cd00009">
    <property type="entry name" value="AAA"/>
    <property type="match status" value="1"/>
</dbReference>
<dbReference type="CDD" id="cd01451">
    <property type="entry name" value="vWA_Magnesium_chelatase"/>
    <property type="match status" value="1"/>
</dbReference>
<dbReference type="FunFam" id="3.40.50.410:FF:000079">
    <property type="entry name" value="Mg-protoporphyrin IX chelatase"/>
    <property type="match status" value="1"/>
</dbReference>
<dbReference type="Gene3D" id="1.10.8.80">
    <property type="entry name" value="Magnesium chelatase subunit I, C-Terminal domain"/>
    <property type="match status" value="1"/>
</dbReference>
<dbReference type="Gene3D" id="3.40.50.300">
    <property type="entry name" value="P-loop containing nucleotide triphosphate hydrolases"/>
    <property type="match status" value="1"/>
</dbReference>
<dbReference type="Gene3D" id="3.40.50.410">
    <property type="entry name" value="von Willebrand factor, type A domain"/>
    <property type="match status" value="1"/>
</dbReference>
<dbReference type="InterPro" id="IPR003593">
    <property type="entry name" value="AAA+_ATPase"/>
</dbReference>
<dbReference type="InterPro" id="IPR041702">
    <property type="entry name" value="BchD/ChlD_VWA"/>
</dbReference>
<dbReference type="InterPro" id="IPR041628">
    <property type="entry name" value="ChlI/MoxR_AAA_lid"/>
</dbReference>
<dbReference type="InterPro" id="IPR011776">
    <property type="entry name" value="Mg_chelatase_ATPase-dsu"/>
</dbReference>
<dbReference type="InterPro" id="IPR000523">
    <property type="entry name" value="Mg_chelatse_chII-like_cat_dom"/>
</dbReference>
<dbReference type="InterPro" id="IPR027417">
    <property type="entry name" value="P-loop_NTPase"/>
</dbReference>
<dbReference type="InterPro" id="IPR002035">
    <property type="entry name" value="VWF_A"/>
</dbReference>
<dbReference type="InterPro" id="IPR036465">
    <property type="entry name" value="vWFA_dom_sf"/>
</dbReference>
<dbReference type="NCBIfam" id="TIGR02031">
    <property type="entry name" value="BchD-ChlD"/>
    <property type="match status" value="1"/>
</dbReference>
<dbReference type="PANTHER" id="PTHR43473">
    <property type="entry name" value="MAGNESIUM-CHELATASE SUBUNIT CHLD, CHLOROPLASTIC"/>
    <property type="match status" value="1"/>
</dbReference>
<dbReference type="PANTHER" id="PTHR43473:SF2">
    <property type="entry name" value="MAGNESIUM-CHELATASE SUBUNIT CHLD, CHLOROPLASTIC"/>
    <property type="match status" value="1"/>
</dbReference>
<dbReference type="Pfam" id="PF17863">
    <property type="entry name" value="AAA_lid_2"/>
    <property type="match status" value="1"/>
</dbReference>
<dbReference type="Pfam" id="PF01078">
    <property type="entry name" value="Mg_chelatase"/>
    <property type="match status" value="1"/>
</dbReference>
<dbReference type="Pfam" id="PF13519">
    <property type="entry name" value="VWA_2"/>
    <property type="match status" value="1"/>
</dbReference>
<dbReference type="SMART" id="SM00382">
    <property type="entry name" value="AAA"/>
    <property type="match status" value="1"/>
</dbReference>
<dbReference type="SMART" id="SM00327">
    <property type="entry name" value="VWA"/>
    <property type="match status" value="1"/>
</dbReference>
<dbReference type="SUPFAM" id="SSF52540">
    <property type="entry name" value="P-loop containing nucleoside triphosphate hydrolases"/>
    <property type="match status" value="1"/>
</dbReference>
<dbReference type="SUPFAM" id="SSF53300">
    <property type="entry name" value="vWA-like"/>
    <property type="match status" value="1"/>
</dbReference>
<dbReference type="PROSITE" id="PS50234">
    <property type="entry name" value="VWFA"/>
    <property type="match status" value="1"/>
</dbReference>
<feature type="transit peptide" description="Chloroplast" evidence="2">
    <location>
        <begin position="1"/>
        <end position="45"/>
    </location>
</feature>
<feature type="chain" id="PRO_0000418769" description="Magnesium-chelatase subunit ChlD, chloroplastic">
    <location>
        <begin position="46"/>
        <end position="754"/>
    </location>
</feature>
<feature type="domain" description="VWFA" evidence="3">
    <location>
        <begin position="553"/>
        <end position="751"/>
    </location>
</feature>
<feature type="region of interest" description="Disordered" evidence="4">
    <location>
        <begin position="1"/>
        <end position="41"/>
    </location>
</feature>
<feature type="region of interest" description="Disordered" evidence="4">
    <location>
        <begin position="397"/>
        <end position="448"/>
    </location>
</feature>
<feature type="region of interest" description="Disordered" evidence="4">
    <location>
        <begin position="665"/>
        <end position="684"/>
    </location>
</feature>
<feature type="compositionally biased region" description="Low complexity" evidence="4">
    <location>
        <begin position="1"/>
        <end position="14"/>
    </location>
</feature>
<feature type="compositionally biased region" description="Low complexity" evidence="4">
    <location>
        <begin position="24"/>
        <end position="41"/>
    </location>
</feature>
<feature type="compositionally biased region" description="Pro residues" evidence="4">
    <location>
        <begin position="407"/>
        <end position="418"/>
    </location>
</feature>
<feature type="compositionally biased region" description="Acidic residues" evidence="4">
    <location>
        <begin position="421"/>
        <end position="443"/>
    </location>
</feature>
<sequence>MAMATTALSASLPRLLPPRRRRFPTPSSSSPSAASTSTSRVVRLRAAAASAPSEVLDSTNGAIPSGKGGGGQQYGREYFPLAAVVGQDAIKTALLLGAIDREIGGIAISGKRGTAKTVMARGLHAMLPPIEVVVGSIANADPNYPEEWEEGLANQVQYDADGNLKTEIIKTPFVQIPLGITEDRLIGSVDVEASVKSGTTVFQPGLLAEAHRGVLYVDEINLLDEGVSNLLLNVLTEGVNIVEREGISFRHPCKPLLIATYNPEEGSVREHLLDRIAINLSADLPMSFDDRVAAVDIATQFQESSKEVFKMVEEETEVAKTQIILAREYLKDVAISTEQLKYLVMEAIRGGCQGHRAELYAARVAKCLAAMEGREKVYVDDLKKAVELVILPRSILSDNPQEQQDQQPPPPPPPPPPQDQDSQEDQDEDEEEDQEDDDEENEQQDQQIPEEFIFDAEGGIVDEKLLFFAQQAQRRRGKAGRAKNLIFSSDRGRYIGSMLPKGPIRRLAVDATLRAAAPYQKLRREKDRDKTRKVFVEKTDMRAKRMARKAGALVIFVVDASGSMALNRMQNAKGAALKLLAESYTSRDQVSIIPFRGDFAEVLLPPSRSIAMARNRLEKLPCGGGSPLAHGLSTAVRVGLNAEKSGDVGRIMIVAITDGRANVSLKKSTDPEATSDAPRPSSQELKDEILEVAGKIYKAGISLLVIDTENKFVSTGFAKEIARVAQGKYYYLPNASDAVISAATKTALSDLKSS</sequence>
<comment type="function">
    <text evidence="1">Involved in chlorophyll biosynthesis. Catalyzes the insertion of magnesium ion into protoporphyrin IX to yield Mg-protoporphyrin IX. The reaction takes place in two steps, with an ATP-dependent activation followed by an ATP-dependent chelation step (By similarity).</text>
</comment>
<comment type="catalytic activity">
    <reaction>
        <text>protoporphyrin IX + Mg(2+) + ATP + H2O = Mg-protoporphyrin IX + ADP + phosphate + 3 H(+)</text>
        <dbReference type="Rhea" id="RHEA:13961"/>
        <dbReference type="ChEBI" id="CHEBI:15377"/>
        <dbReference type="ChEBI" id="CHEBI:15378"/>
        <dbReference type="ChEBI" id="CHEBI:18420"/>
        <dbReference type="ChEBI" id="CHEBI:30616"/>
        <dbReference type="ChEBI" id="CHEBI:43474"/>
        <dbReference type="ChEBI" id="CHEBI:57306"/>
        <dbReference type="ChEBI" id="CHEBI:60492"/>
        <dbReference type="ChEBI" id="CHEBI:456216"/>
        <dbReference type="EC" id="6.6.1.1"/>
    </reaction>
</comment>
<comment type="pathway">
    <text>Porphyrin-containing compound metabolism; chlorophyll biosynthesis.</text>
</comment>
<comment type="subunit">
    <text evidence="1">The magnesium chelatase complex is a heterotrimer consisting of subunits CHLI, CHLD and CHLH.</text>
</comment>
<comment type="subcellular location">
    <subcellularLocation>
        <location evidence="1">Plastid</location>
        <location evidence="1">Chloroplast</location>
    </subcellularLocation>
</comment>
<comment type="similarity">
    <text evidence="5">Belongs to the Mg-chelatase subunits D/I family.</text>
</comment>
<organism>
    <name type="scientific">Oryza sativa subsp. indica</name>
    <name type="common">Rice</name>
    <dbReference type="NCBI Taxonomy" id="39946"/>
    <lineage>
        <taxon>Eukaryota</taxon>
        <taxon>Viridiplantae</taxon>
        <taxon>Streptophyta</taxon>
        <taxon>Embryophyta</taxon>
        <taxon>Tracheophyta</taxon>
        <taxon>Spermatophyta</taxon>
        <taxon>Magnoliopsida</taxon>
        <taxon>Liliopsida</taxon>
        <taxon>Poales</taxon>
        <taxon>Poaceae</taxon>
        <taxon>BOP clade</taxon>
        <taxon>Oryzoideae</taxon>
        <taxon>Oryzeae</taxon>
        <taxon>Oryzinae</taxon>
        <taxon>Oryza</taxon>
        <taxon>Oryza sativa</taxon>
    </lineage>
</organism>
<proteinExistence type="inferred from homology"/>
<name>CHLD_ORYSI</name>
<gene>
    <name type="primary">CHLD</name>
    <name type="synonym">CHL1</name>
    <name type="ORF">OsI_14020</name>
</gene>
<evidence type="ECO:0000250" key="1"/>
<evidence type="ECO:0000255" key="2"/>
<evidence type="ECO:0000255" key="3">
    <source>
        <dbReference type="PROSITE-ProRule" id="PRU00219"/>
    </source>
</evidence>
<evidence type="ECO:0000256" key="4">
    <source>
        <dbReference type="SAM" id="MobiDB-lite"/>
    </source>
</evidence>
<evidence type="ECO:0000305" key="5"/>